<gene>
    <name evidence="20" type="primary">sbt3</name>
    <name evidence="15" type="ordered locus">Solyc01g087850</name>
</gene>
<reference evidence="19 20" key="1">
    <citation type="journal article" date="1999" name="Plant Mol. Biol.">
        <title>Characterization of the subtilase gene family in tomato (Lycopersicon esculentum Mill.).</title>
        <authorList>
            <person name="Meichtry J."/>
            <person name="Amrhein N."/>
            <person name="Schaller A."/>
        </authorList>
    </citation>
    <scope>NUCLEOTIDE SEQUENCE [GENOMIC DNA / MRNA]</scope>
    <scope>TISSUE SPECIFICITY</scope>
    <source>
        <strain evidence="10">VFW8</strain>
        <tissue evidence="10">Leaf</tissue>
    </source>
</reference>
<reference key="2">
    <citation type="journal article" date="2012" name="Nature">
        <title>The tomato genome sequence provides insights into fleshy fruit evolution.</title>
        <authorList>
            <consortium name="Tomato Genome Consortium"/>
        </authorList>
    </citation>
    <scope>NUCLEOTIDE SEQUENCE [LARGE SCALE GENOMIC DNA]</scope>
    <source>
        <strain>cv. Heinz 1706</strain>
    </source>
</reference>
<reference key="3">
    <citation type="journal article" date="2009" name="J. Biol. Chem.">
        <title>The protease-associated domain and C-terminal extension are required for zymogen processing, sorting within the secretory pathway, and activity of tomato subtilase 3 (SlSBT3).</title>
        <authorList>
            <person name="Cedzich A."/>
            <person name="Huttenlocher F."/>
            <person name="Kuhn B.M."/>
            <person name="Pfannstiel J."/>
            <person name="Gabler L."/>
            <person name="Stintzi A."/>
            <person name="Schaller A."/>
        </authorList>
    </citation>
    <scope>PROTEIN SEQUENCE OF 113-141; 142-165; 168-183; 184-193; 194-210; 211-242; 248-365; 370-377; 419-487; 492-499; 553-604; 676-696; 697-701; 711-732; 733-749 AND 750-761</scope>
    <scope>IDENTIFICATION BY MASS SPECTROMETRY</scope>
    <scope>FUNCTION</scope>
    <scope>CATALYTIC ACTIVITY</scope>
    <scope>ACTIVITY REGULATION</scope>
    <scope>BIOPHYSICOCHEMICAL PROPERTIES</scope>
    <scope>SUBSTRATE SPECIFICITY</scope>
    <scope>SUBCELLULAR LOCATION</scope>
    <scope>REGION</scope>
    <scope>GLYCOSYLATION AT ASN-177; ASN-203; ASN-376; ASN-697 AND ASN-745</scope>
    <scope>MUTAGENESIS OF 363-PRO--VAL-456 AND SER-538</scope>
</reference>
<reference key="4">
    <citation type="journal article" date="2009" name="Acta Crystallogr. F">
        <title>Purification, crystallization and preliminary X-ray diffraction analysis of a plant subtilase.</title>
        <authorList>
            <person name="Rose R."/>
            <person name="Huttenlocher F."/>
            <person name="Cedzich A."/>
            <person name="Kaiser M."/>
            <person name="Schaller A."/>
            <person name="Ottmann C."/>
        </authorList>
    </citation>
    <scope>FUNCTION</scope>
    <scope>CATALYTIC ACTIVITY</scope>
    <scope>SUBCELLULAR LOCATION</scope>
    <scope>CRYSTALLIZATION</scope>
</reference>
<reference key="5">
    <citation type="journal article" date="2016" name="J. Biol. Chem.">
        <title>Functional Characterization of Propeptides in Plant Subtilases as Intramolecular Chaperones and Inhibitors of the Mature Protease.</title>
        <authorList>
            <person name="Meyer M."/>
            <person name="Leptihn S."/>
            <person name="Welz M."/>
            <person name="Schaller A."/>
        </authorList>
    </citation>
    <scope>FUNCTION</scope>
    <scope>CATALYTIC ACTIVITY</scope>
    <scope>ACTIVITY REGULATION</scope>
    <scope>BIOPHYSICOCHEMICAL PROPERTIES</scope>
    <scope>CIRCULAR DICHROISM ANALYSIS</scope>
    <scope>SUBCELLULAR LOCATION</scope>
    <scope>DOMAIN</scope>
    <scope>PTM</scope>
    <scope>SITE</scope>
    <scope>MUTAGENESIS OF 23-GLN--HIS-112 AND 57-SER--LYS-70</scope>
</reference>
<reference key="6">
    <citation type="journal article" date="2016" name="J. Exp. Bot.">
        <title>The subtilisin-like protease SBT3 contributes to insect resistance in tomato.</title>
        <authorList>
            <person name="Meyer M."/>
            <person name="Huttenlocher F."/>
            <person name="Cedzich A."/>
            <person name="Procopio S."/>
            <person name="Stroeder J."/>
            <person name="Pau-Roblot C."/>
            <person name="Lequart-Pillon M."/>
            <person name="Pelloux J."/>
            <person name="Stintzi A."/>
            <person name="Schaller A."/>
        </authorList>
    </citation>
    <scope>FUNCTION</scope>
    <scope>CATALYTIC ACTIVITY</scope>
    <scope>DEVELOPMENTAL STAGE</scope>
    <scope>INDUCTION</scope>
    <scope>DISRUPTION PHENOTYPE</scope>
</reference>
<reference evidence="21 22" key="7">
    <citation type="journal article" date="2009" name="Proc. Natl. Acad. Sci. U.S.A.">
        <title>Structural basis for Ca2+-independence and activation by homodimerization of tomato subtilase 3.</title>
        <authorList>
            <person name="Ottmann C."/>
            <person name="Rose R."/>
            <person name="Huttenlocher F."/>
            <person name="Cedzich A."/>
            <person name="Hauske P."/>
            <person name="Kaiser M."/>
            <person name="Huber R."/>
            <person name="Schaller A."/>
        </authorList>
    </citation>
    <scope>X-RAY CRYSTALLOGRAPHY (2.50 ANGSTROMS) OF 113-761 AND IN COMPLEX WITH INHIBITOR</scope>
    <scope>FUNCTION</scope>
    <scope>CATALYTIC ACTIVITY</scope>
    <scope>ACTIVITY REGULATION</scope>
    <scope>BIOPHYSICOCHEMICAL PROPERTIES</scope>
    <scope>SUBUNIT</scope>
    <scope>SUBCELLULAR LOCATION</scope>
    <scope>DOMAIN</scope>
    <scope>BIOTECHNOLOGY</scope>
    <scope>ACTIVE SITE</scope>
    <scope>GLYCOSYLATION AT ASN-177; ASN-203 AND ASN-376</scope>
    <scope>DISULFIDE BONDS</scope>
    <scope>MUTAGENESIS OF ARG-365; PHE-367 AND ARG-418</scope>
</reference>
<protein>
    <recommendedName>
        <fullName evidence="13">Subtilisin-like protease SBT3</fullName>
        <ecNumber evidence="5 6 7 8 9">3.4.21.-</ecNumber>
    </recommendedName>
    <alternativeName>
        <fullName evidence="10">LeSBT3</fullName>
    </alternativeName>
    <alternativeName>
        <fullName evidence="11">SlSBT3</fullName>
    </alternativeName>
    <alternativeName>
        <fullName evidence="11 12 14">Subtilase 3</fullName>
    </alternativeName>
</protein>
<comment type="function">
    <text evidence="5 6 7 8 9">Serine protease (PubMed:19332543, PubMed:19407393, PubMed:19805099, PubMed:27259555, PubMed:27451395). Has preference for Gln in the P1 position and Lys in the P2 position of oligopeptide substrates. Active also with His in the P1 position (PubMed:19332543). Involved in resistance against insects partly by regulating expression of systemic wound response genes and possibly by its post-ingestive activity in the insect gut. Apart from the role in defense, may be involved in regulation of pectin methylesterases (PMEs) activity and pectin methylesterification of the cell wall (PubMed:27259555).</text>
</comment>
<comment type="activity regulation">
    <text evidence="5 7 9">Inhibited by 1 mM 4-(2-aminoethyl)-benzenesulfonyl fluoride (AEBSF), a general inhibitor of serine proteinases, but not by the more selective serine protease inhibitors N-alpha-tosyl-L-lysinyl-chloromethylketone (TLCK), N-tosyl-L-phenylalaninyl-chloromethylketone (TPCK), leupeptin, aprotinin or benzamidine (PubMed:19332543). Its proteolytic activity is autoinhibited by the non-covalent binding of the propeptide to the catalytic domain (PubMed:27451395). No effect on activity by the addition of CaCl(2) or calcium chelators (PubMed:19805099).</text>
</comment>
<comment type="biophysicochemical properties">
    <kinetics>
        <KM evidence="5">32.8 uM for aminobenzoyl-SKRDPPKMQTDLY(NO2) derived from the plant peptide hormone systemin (at pH 8.0 and 25 degrees Celsius)</KM>
        <Vmax evidence="5">0.151 nmol/min/mg enzyme with aminobenzoyl-SKRDPPKMQTDLY(NO2) derived from the plant peptide hormone systemin as substrate (at pH 8.0 and 25 degrees Celsius)</Vmax>
    </kinetics>
    <phDependence>
        <text evidence="5 7">Optimum pH is 7.5-8.0. 60% of the activity is retained at pH 11.0 (PubMed:19332543). No autolysis at pH 4.0-9.0 in the presence of 5 mM EDTA or 5 mM CaCl(2) (PubMed:19805099).</text>
    </phDependence>
    <temperatureDependence>
        <text evidence="5 7 9">Thermostable (PubMed:19332543, PubMed:19805099, PubMed:27451395). Activity is unaffected by heating to 60 degrees Celsius and only partially reduced after incubation at 70 degrees Celsius (PubMed:19332543).</text>
    </temperatureDependence>
</comment>
<comment type="subunit">
    <text evidence="7">Homodimer.</text>
</comment>
<comment type="interaction">
    <interactant intactId="EBI-15805051">
        <id>O82777</id>
    </interactant>
    <interactant intactId="EBI-15805051">
        <id>O82777</id>
        <label>sbt3</label>
    </interactant>
    <organismsDiffer>false</organismsDiffer>
    <experiments>3</experiments>
</comment>
<comment type="subcellular location">
    <subcellularLocation>
        <location evidence="5 6 7 9">Secreted</location>
    </subcellularLocation>
    <text evidence="5">Autocatalytic cleavage is required for the secretion of the mature protein.</text>
</comment>
<comment type="tissue specificity">
    <text evidence="4">Expressed in flowers, cotyledons and leaves with the highest expression in roots.</text>
</comment>
<comment type="developmental stage">
    <text evidence="8">Expressed during early seedling development in the micropylar endosperm as well as in the developing root. Also expressed in the mature root system, particularly at the junction between primary and lateral roots. Expressed in the shoot vasculature in both external and internal phloem including sieve elements and companion cells, and also in the vascular (xylem and phloem) parenchyma in 3-week old plants.</text>
</comment>
<comment type="induction">
    <text evidence="8">Expressed in response to mechanical wounding and insect herbivory in leaves. Not expressed in uninjured leaves.</text>
</comment>
<comment type="domain">
    <text evidence="17">The mature polypeptide has three domains: The catalytic domain, an interposed protease-associated (PA) domain required for homodimerization and a C-terminal seven-stranded jelly-roll fibronectin (Fn) III-like domain.</text>
</comment>
<comment type="domain">
    <text evidence="18">The propeptide is required as an intramolecular chaperone for zymogen maturation and secretion.</text>
</comment>
<comment type="PTM">
    <text evidence="9">Propeptide is internally cleaved at Asn-38 and Asp-52 in a pH-dependent manner leading to the dissociation of the propeptide from the catalytic domain and resulting in the release of the active subtilase. Cleavage occurs at pH 5.7 and to a stronger extent at pH 5.2.</text>
</comment>
<comment type="disruption phenotype">
    <text evidence="8">RNAi-mediated knockdown results in partial loss of resistance against M.sexta larvae, impaired systemic induction of late wound response genes and in reduced levels of cell wall homogalacturonan (HG) and pectin methylesterification (DM).</text>
</comment>
<comment type="biotechnology">
    <text evidence="17">Has the potential to be used as an additive in laundry and dishwashing detergents, because it is a calcium-free thermostable subtilase alternative.</text>
</comment>
<comment type="similarity">
    <text evidence="15">Belongs to the peptidase S8 family.</text>
</comment>
<keyword id="KW-0002">3D-structure</keyword>
<keyword id="KW-0068">Autocatalytic cleavage</keyword>
<keyword id="KW-0165">Cleavage on pair of basic residues</keyword>
<keyword id="KW-0903">Direct protein sequencing</keyword>
<keyword id="KW-1015">Disulfide bond</keyword>
<keyword id="KW-0325">Glycoprotein</keyword>
<keyword id="KW-0378">Hydrolase</keyword>
<keyword id="KW-0611">Plant defense</keyword>
<keyword id="KW-0645">Protease</keyword>
<keyword id="KW-1185">Reference proteome</keyword>
<keyword id="KW-0964">Secreted</keyword>
<keyword id="KW-0720">Serine protease</keyword>
<keyword id="KW-0732">Signal</keyword>
<keyword id="KW-0865">Zymogen</keyword>
<proteinExistence type="evidence at protein level"/>
<name>SBT3_SOLLC</name>
<sequence>MELLHLLLFSWALSAHLFLALAQRSTYIVHLDKSLMPNVFTDHHHWHSSTIDSIKASVPSSVDRFHSAPKLVYSYDNVLHGFSAVLSKDELAALKKLPGFISAYKDRTVEPHTTHTSDFLKLNPSSGLWPASGLGQDVIVAVLDSGIWPESASFQDDGMPEIPKRWKGICKPGTQFNASMCNRKLIGANYFNKGILANDPTVNITMNSARDTDGHGTHCASITAGNFAKGVSHFGYAPGTARGVAPRARLAVYKFSFNEGTFTSDLIAAMDQAVADGVDMISISYGYRFIPLYEDAISIASFGAMMKGVLVSASAGNRGPGIGSLNNGSPWILCVASGHTDRTFAGTLTLGNGLKIRGWSLFPARAFVRDSPVIYNKTLSDCSSEELLSQVENPENTIVICDDNGDFSDQMRIITRARLKAAIFISEDPGVFRSATFPNPGVVVNKKEGKQVINYVKNSVTPTATITFQETYLDTKPAPVVAASSARGPSRSYLGISKPDILAPGVLILAAYPPNVFATSIGTNILLSTDYILESGTSMAAPHAAGIAAMLKAAHPEWSPSAIRSAMMTTADPLDNTRKPIKDSDNNKAATPLDMGAGHVDPNRALDPGLVYDATPQDYVNLLCSLNFTEEQFKTIARSSASHNCSNPSADLNYPSFIALYSIEGNFTLLEQKFKRTVTNVGKGAATYKAKLKAPKNSTISVSPQILVFKNKNEKQSYTLTIRYIGDEGQSRNVGSITWVEQNGNHSVRSPIVTSPIIEVW</sequence>
<dbReference type="EC" id="3.4.21.-" evidence="5 6 7 8 9"/>
<dbReference type="EMBL" id="AJ006376">
    <property type="protein sequence ID" value="CAA06997.1"/>
    <property type="molecule type" value="mRNA"/>
</dbReference>
<dbReference type="EMBL" id="AJ006380">
    <property type="protein sequence ID" value="CAA07001.1"/>
    <property type="molecule type" value="Genomic_DNA"/>
</dbReference>
<dbReference type="PIR" id="T07169">
    <property type="entry name" value="T07169"/>
</dbReference>
<dbReference type="RefSeq" id="NP_001234774.1">
    <property type="nucleotide sequence ID" value="NM_001247845.1"/>
</dbReference>
<dbReference type="PDB" id="3I6S">
    <property type="method" value="X-ray"/>
    <property type="resolution" value="2.50 A"/>
    <property type="chains" value="A/B=113-761"/>
</dbReference>
<dbReference type="PDB" id="3I74">
    <property type="method" value="X-ray"/>
    <property type="resolution" value="2.60 A"/>
    <property type="chains" value="A/B=113-761"/>
</dbReference>
<dbReference type="PDBsum" id="3I6S"/>
<dbReference type="PDBsum" id="3I74"/>
<dbReference type="SMR" id="O82777"/>
<dbReference type="DIP" id="DIP-48980N"/>
<dbReference type="FunCoup" id="O82777">
    <property type="interactions" value="4"/>
</dbReference>
<dbReference type="STRING" id="4081.O82777"/>
<dbReference type="MEROPS" id="S08.151"/>
<dbReference type="GlyCosmos" id="O82777">
    <property type="glycosylation" value="5 sites, No reported glycans"/>
</dbReference>
<dbReference type="iPTMnet" id="O82777"/>
<dbReference type="PaxDb" id="4081-Solyc01g087850.2.1"/>
<dbReference type="EnsemblPlants" id="Solyc01g087850.2.1">
    <property type="protein sequence ID" value="Solyc01g087850.2.1.1"/>
    <property type="gene ID" value="Solyc01g087850.2"/>
</dbReference>
<dbReference type="GeneID" id="543726"/>
<dbReference type="Gramene" id="Solyc01g087850.2.1">
    <property type="protein sequence ID" value="Solyc01g087850.2.1.1"/>
    <property type="gene ID" value="Solyc01g087850.2"/>
</dbReference>
<dbReference type="KEGG" id="sly:543726"/>
<dbReference type="eggNOG" id="ENOG502QT5U">
    <property type="taxonomic scope" value="Eukaryota"/>
</dbReference>
<dbReference type="HOGENOM" id="CLU_000625_4_6_1"/>
<dbReference type="InParanoid" id="O82777"/>
<dbReference type="OMA" id="ASHNCSN"/>
<dbReference type="OrthoDB" id="206201at2759"/>
<dbReference type="PhylomeDB" id="O82777"/>
<dbReference type="SABIO-RK" id="O82777"/>
<dbReference type="EvolutionaryTrace" id="O82777"/>
<dbReference type="Proteomes" id="UP000004994">
    <property type="component" value="Chromosome 1"/>
</dbReference>
<dbReference type="GO" id="GO:0005615">
    <property type="term" value="C:extracellular space"/>
    <property type="evidence" value="ECO:0000314"/>
    <property type="project" value="UniProtKB"/>
</dbReference>
<dbReference type="GO" id="GO:0042802">
    <property type="term" value="F:identical protein binding"/>
    <property type="evidence" value="ECO:0000353"/>
    <property type="project" value="IntAct"/>
</dbReference>
<dbReference type="GO" id="GO:0042803">
    <property type="term" value="F:protein homodimerization activity"/>
    <property type="evidence" value="ECO:0000314"/>
    <property type="project" value="UniProtKB"/>
</dbReference>
<dbReference type="GO" id="GO:0004252">
    <property type="term" value="F:serine-type endopeptidase activity"/>
    <property type="evidence" value="ECO:0007669"/>
    <property type="project" value="InterPro"/>
</dbReference>
<dbReference type="GO" id="GO:0008236">
    <property type="term" value="F:serine-type peptidase activity"/>
    <property type="evidence" value="ECO:0000314"/>
    <property type="project" value="UniProtKB"/>
</dbReference>
<dbReference type="GO" id="GO:0006952">
    <property type="term" value="P:defense response"/>
    <property type="evidence" value="ECO:0007669"/>
    <property type="project" value="UniProtKB-KW"/>
</dbReference>
<dbReference type="GO" id="GO:0043171">
    <property type="term" value="P:peptide catabolic process"/>
    <property type="evidence" value="ECO:0000314"/>
    <property type="project" value="UniProtKB"/>
</dbReference>
<dbReference type="GO" id="GO:0009827">
    <property type="term" value="P:plant-type cell wall modification"/>
    <property type="evidence" value="ECO:0000315"/>
    <property type="project" value="UniProtKB"/>
</dbReference>
<dbReference type="GO" id="GO:1900367">
    <property type="term" value="P:positive regulation of defense response to insect"/>
    <property type="evidence" value="ECO:0000270"/>
    <property type="project" value="UniProtKB"/>
</dbReference>
<dbReference type="GO" id="GO:0010628">
    <property type="term" value="P:positive regulation of gene expression"/>
    <property type="evidence" value="ECO:0000315"/>
    <property type="project" value="UniProtKB"/>
</dbReference>
<dbReference type="GO" id="GO:0006508">
    <property type="term" value="P:proteolysis"/>
    <property type="evidence" value="ECO:0000314"/>
    <property type="project" value="UniProtKB"/>
</dbReference>
<dbReference type="GO" id="GO:1902066">
    <property type="term" value="P:regulation of cell wall pectin metabolic process"/>
    <property type="evidence" value="ECO:0000315"/>
    <property type="project" value="UniProtKB"/>
</dbReference>
<dbReference type="GO" id="GO:0009611">
    <property type="term" value="P:response to wounding"/>
    <property type="evidence" value="ECO:0000270"/>
    <property type="project" value="UniProtKB"/>
</dbReference>
<dbReference type="GO" id="GO:0097264">
    <property type="term" value="P:self proteolysis"/>
    <property type="evidence" value="ECO:0000315"/>
    <property type="project" value="UniProtKB"/>
</dbReference>
<dbReference type="CDD" id="cd02120">
    <property type="entry name" value="PA_subtilisin_like"/>
    <property type="match status" value="1"/>
</dbReference>
<dbReference type="CDD" id="cd04852">
    <property type="entry name" value="Peptidases_S8_3"/>
    <property type="match status" value="1"/>
</dbReference>
<dbReference type="FunFam" id="3.40.50.200:FF:000006">
    <property type="entry name" value="Subtilisin-like protease SBT1.5"/>
    <property type="match status" value="1"/>
</dbReference>
<dbReference type="FunFam" id="3.30.70.80:FF:000003">
    <property type="entry name" value="Subtilisin-like protease SBT1.9"/>
    <property type="match status" value="1"/>
</dbReference>
<dbReference type="FunFam" id="2.60.40.2310:FF:000004">
    <property type="entry name" value="Subtilisin-like protease SBT3"/>
    <property type="match status" value="1"/>
</dbReference>
<dbReference type="FunFam" id="3.50.30.30:FF:000039">
    <property type="entry name" value="Subtilisin-like protease SBT3"/>
    <property type="match status" value="1"/>
</dbReference>
<dbReference type="Gene3D" id="2.60.40.2310">
    <property type="match status" value="1"/>
</dbReference>
<dbReference type="Gene3D" id="3.50.30.30">
    <property type="match status" value="1"/>
</dbReference>
<dbReference type="Gene3D" id="3.30.70.80">
    <property type="entry name" value="Peptidase S8 propeptide/proteinase inhibitor I9"/>
    <property type="match status" value="1"/>
</dbReference>
<dbReference type="Gene3D" id="3.40.50.200">
    <property type="entry name" value="Peptidase S8/S53 domain"/>
    <property type="match status" value="1"/>
</dbReference>
<dbReference type="InterPro" id="IPR000209">
    <property type="entry name" value="Peptidase_S8/S53_dom"/>
</dbReference>
<dbReference type="InterPro" id="IPR036852">
    <property type="entry name" value="Peptidase_S8/S53_dom_sf"/>
</dbReference>
<dbReference type="InterPro" id="IPR023828">
    <property type="entry name" value="Peptidase_S8_Ser-AS"/>
</dbReference>
<dbReference type="InterPro" id="IPR015500">
    <property type="entry name" value="Peptidase_S8_subtilisin-rel"/>
</dbReference>
<dbReference type="InterPro" id="IPR034197">
    <property type="entry name" value="Peptidases_S8_3"/>
</dbReference>
<dbReference type="InterPro" id="IPR010259">
    <property type="entry name" value="S8pro/Inhibitor_I9"/>
</dbReference>
<dbReference type="InterPro" id="IPR037045">
    <property type="entry name" value="S8pro/Inhibitor_I9_sf"/>
</dbReference>
<dbReference type="InterPro" id="IPR045051">
    <property type="entry name" value="SBT"/>
</dbReference>
<dbReference type="InterPro" id="IPR041469">
    <property type="entry name" value="Subtilisin-like_FN3"/>
</dbReference>
<dbReference type="PANTHER" id="PTHR10795">
    <property type="entry name" value="PROPROTEIN CONVERTASE SUBTILISIN/KEXIN"/>
    <property type="match status" value="1"/>
</dbReference>
<dbReference type="Pfam" id="PF17766">
    <property type="entry name" value="fn3_6"/>
    <property type="match status" value="1"/>
</dbReference>
<dbReference type="Pfam" id="PF05922">
    <property type="entry name" value="Inhibitor_I9"/>
    <property type="match status" value="1"/>
</dbReference>
<dbReference type="Pfam" id="PF00082">
    <property type="entry name" value="Peptidase_S8"/>
    <property type="match status" value="1"/>
</dbReference>
<dbReference type="PRINTS" id="PR00723">
    <property type="entry name" value="SUBTILISIN"/>
</dbReference>
<dbReference type="SUPFAM" id="SSF52743">
    <property type="entry name" value="Subtilisin-like"/>
    <property type="match status" value="1"/>
</dbReference>
<dbReference type="PROSITE" id="PS51892">
    <property type="entry name" value="SUBTILASE"/>
    <property type="match status" value="1"/>
</dbReference>
<dbReference type="PROSITE" id="PS00138">
    <property type="entry name" value="SUBTILASE_SER"/>
    <property type="match status" value="1"/>
</dbReference>
<accession>O82777</accession>
<organism evidence="20">
    <name type="scientific">Solanum lycopersicum</name>
    <name type="common">Tomato</name>
    <name type="synonym">Lycopersicon esculentum</name>
    <dbReference type="NCBI Taxonomy" id="4081"/>
    <lineage>
        <taxon>Eukaryota</taxon>
        <taxon>Viridiplantae</taxon>
        <taxon>Streptophyta</taxon>
        <taxon>Embryophyta</taxon>
        <taxon>Tracheophyta</taxon>
        <taxon>Spermatophyta</taxon>
        <taxon>Magnoliopsida</taxon>
        <taxon>eudicotyledons</taxon>
        <taxon>Gunneridae</taxon>
        <taxon>Pentapetalae</taxon>
        <taxon>asterids</taxon>
        <taxon>lamiids</taxon>
        <taxon>Solanales</taxon>
        <taxon>Solanaceae</taxon>
        <taxon>Solanoideae</taxon>
        <taxon>Solaneae</taxon>
        <taxon>Solanum</taxon>
        <taxon>Solanum subgen. Lycopersicon</taxon>
    </lineage>
</organism>
<evidence type="ECO:0000255" key="1"/>
<evidence type="ECO:0000255" key="2">
    <source>
        <dbReference type="PROSITE-ProRule" id="PRU01240"/>
    </source>
</evidence>
<evidence type="ECO:0000256" key="3">
    <source>
        <dbReference type="SAM" id="MobiDB-lite"/>
    </source>
</evidence>
<evidence type="ECO:0000269" key="4">
    <source>
    </source>
</evidence>
<evidence type="ECO:0000269" key="5">
    <source>
    </source>
</evidence>
<evidence type="ECO:0000269" key="6">
    <source>
    </source>
</evidence>
<evidence type="ECO:0000269" key="7">
    <source>
    </source>
</evidence>
<evidence type="ECO:0000269" key="8">
    <source>
    </source>
</evidence>
<evidence type="ECO:0000269" key="9">
    <source>
    </source>
</evidence>
<evidence type="ECO:0000303" key="10">
    <source>
    </source>
</evidence>
<evidence type="ECO:0000303" key="11">
    <source>
    </source>
</evidence>
<evidence type="ECO:0000303" key="12">
    <source>
    </source>
</evidence>
<evidence type="ECO:0000303" key="13">
    <source>
    </source>
</evidence>
<evidence type="ECO:0000303" key="14">
    <source>
    </source>
</evidence>
<evidence type="ECO:0000305" key="15"/>
<evidence type="ECO:0000305" key="16">
    <source>
    </source>
</evidence>
<evidence type="ECO:0000305" key="17">
    <source>
    </source>
</evidence>
<evidence type="ECO:0000305" key="18">
    <source>
    </source>
</evidence>
<evidence type="ECO:0000312" key="19">
    <source>
        <dbReference type="EMBL" id="CAA06997.1"/>
    </source>
</evidence>
<evidence type="ECO:0000312" key="20">
    <source>
        <dbReference type="EMBL" id="CAA07001.1"/>
    </source>
</evidence>
<evidence type="ECO:0007744" key="21">
    <source>
        <dbReference type="PDB" id="3I6S"/>
    </source>
</evidence>
<evidence type="ECO:0007744" key="22">
    <source>
        <dbReference type="PDB" id="3I74"/>
    </source>
</evidence>
<evidence type="ECO:0007829" key="23">
    <source>
        <dbReference type="PDB" id="3I6S"/>
    </source>
</evidence>
<feature type="signal peptide" evidence="1">
    <location>
        <begin position="1"/>
        <end position="22"/>
    </location>
</feature>
<feature type="propeptide" id="PRO_0000446634" evidence="1 16">
    <location>
        <begin position="23"/>
        <end position="112"/>
    </location>
</feature>
<feature type="chain" id="PRO_5015096818" description="Subtilisin-like protease SBT3" evidence="16">
    <location>
        <begin position="113"/>
        <end position="761"/>
    </location>
</feature>
<feature type="domain" description="Inhibitor I9" evidence="1">
    <location>
        <begin position="26"/>
        <end position="110"/>
    </location>
</feature>
<feature type="domain" description="Peptidase S8" evidence="2">
    <location>
        <begin position="116"/>
        <end position="606"/>
    </location>
</feature>
<feature type="region of interest" description="Disordered" evidence="3">
    <location>
        <begin position="574"/>
        <end position="598"/>
    </location>
</feature>
<feature type="region of interest" description="Necessary for prodomain cleavage and secretion" evidence="5">
    <location>
        <begin position="756"/>
        <end position="761"/>
    </location>
</feature>
<feature type="compositionally biased region" description="Basic and acidic residues" evidence="3">
    <location>
        <begin position="575"/>
        <end position="586"/>
    </location>
</feature>
<feature type="active site" description="Charge relay system" evidence="2">
    <location>
        <position position="144"/>
    </location>
</feature>
<feature type="active site" description="Charge relay system" evidence="2 7">
    <location>
        <position position="215"/>
    </location>
</feature>
<feature type="active site" description="Charge relay system" evidence="2 5 7">
    <location>
        <position position="538"/>
    </location>
</feature>
<feature type="site" description="Cleavage; by autolysis" evidence="9">
    <location>
        <begin position="38"/>
        <end position="39"/>
    </location>
</feature>
<feature type="site" description="Cleavage; by autolysis" evidence="9">
    <location>
        <begin position="52"/>
        <end position="53"/>
    </location>
</feature>
<feature type="glycosylation site" description="N-linked (GlcNAc...) (complex) asparagine; alternate" evidence="5">
    <location>
        <position position="177"/>
    </location>
</feature>
<feature type="glycosylation site" description="N-linked (GlcNAc...) (paucimannose) asparagine; alternate" evidence="5">
    <location>
        <position position="177"/>
    </location>
</feature>
<feature type="glycosylation site" description="N-linked (GlcNAc...) (complex) asparagine; alternate" evidence="5">
    <location>
        <position position="203"/>
    </location>
</feature>
<feature type="glycosylation site" description="N-linked (GlcNAc...) (paucimannose) asparagine; alternate" evidence="5">
    <location>
        <position position="203"/>
    </location>
</feature>
<feature type="glycosylation site" description="N-linked (GlcNAc...) (paucimannose) asparagine; partial" evidence="5">
    <location>
        <position position="376"/>
    </location>
</feature>
<feature type="glycosylation site" description="N-linked (GlcNAc...) (complex) asparagine; alternate" evidence="5">
    <location>
        <position position="697"/>
    </location>
</feature>
<feature type="glycosylation site" description="N-linked (GlcNAc...) (paucimannose) asparagine; alternate" evidence="5">
    <location>
        <position position="697"/>
    </location>
</feature>
<feature type="glycosylation site" description="N-linked (GlcNAc...) (complex) asparagine; alternate" evidence="5">
    <location>
        <position position="745"/>
    </location>
</feature>
<feature type="glycosylation site" description="N-linked (GlcNAc...) (paucimannose) asparagine; alternate" evidence="5">
    <location>
        <position position="745"/>
    </location>
</feature>
<feature type="disulfide bond" evidence="7 21 22">
    <location>
        <begin position="170"/>
        <end position="181"/>
    </location>
</feature>
<feature type="disulfide bond" evidence="7 21 22">
    <location>
        <begin position="382"/>
        <end position="401"/>
    </location>
</feature>
<feature type="disulfide bond" evidence="7 21 22">
    <location>
        <begin position="624"/>
        <end position="645"/>
    </location>
</feature>
<feature type="mutagenesis site" description="Not secreted." evidence="9">
    <location>
        <begin position="23"/>
        <end position="112"/>
    </location>
</feature>
<feature type="mutagenesis site" description="Weakly decreased autoinhibition. Loss of ability to act as a chaperone." evidence="9">
    <location>
        <begin position="57"/>
        <end position="70"/>
    </location>
</feature>
<feature type="mutagenesis site" description="Accumulates intracellularly as an unprocessed zymogen." evidence="5">
    <location>
        <begin position="363"/>
        <end position="456"/>
    </location>
</feature>
<feature type="mutagenesis site" description="Decreased catalytic activity and dimerization ability; when associated with A-418." evidence="7">
    <original>R</original>
    <variation>A</variation>
    <location>
        <position position="365"/>
    </location>
</feature>
<feature type="mutagenesis site" description="Decreased catalytic activity and dimerization ability; when associated with A-418." evidence="7">
    <original>F</original>
    <variation>A</variation>
    <location>
        <position position="367"/>
    </location>
</feature>
<feature type="mutagenesis site" description="Decreased catalytic activity and dimerization ability; when associated with A-367 or A-365." evidence="7">
    <original>R</original>
    <variation>A</variation>
    <location>
        <position position="418"/>
    </location>
</feature>
<feature type="mutagenesis site" description="Loss of catalytic activity. Accumulates intracellularly as an unprocessed zymogen. No cleavage of the prodomain by the wild-type SBT3 indicating that the zymogen maturation is an intramolecular autocatalytic process. Sensitive to endoglycosidases Endo H and PNGase F in contrast to the wild-type which is resistant to both." evidence="5">
    <original>S</original>
    <variation>A</variation>
    <location>
        <position position="538"/>
    </location>
</feature>
<feature type="mutagenesis site" description="Loss of catalytic activity. Accumulates intracellularly as an unprocessed zymogen. Sensitive to endoglycosidases Endo H and PNGase F in contrast to the wild-type which is resistant to both." evidence="5">
    <original>S</original>
    <variation>C</variation>
    <location>
        <position position="538"/>
    </location>
</feature>
<feature type="helix" evidence="23">
    <location>
        <begin position="116"/>
        <end position="119"/>
    </location>
</feature>
<feature type="strand" evidence="23">
    <location>
        <begin position="124"/>
        <end position="127"/>
    </location>
</feature>
<feature type="helix" evidence="23">
    <location>
        <begin position="128"/>
        <end position="132"/>
    </location>
</feature>
<feature type="helix" evidence="23">
    <location>
        <begin position="133"/>
        <end position="135"/>
    </location>
</feature>
<feature type="strand" evidence="23">
    <location>
        <begin position="139"/>
        <end position="145"/>
    </location>
</feature>
<feature type="helix" evidence="23">
    <location>
        <begin position="152"/>
        <end position="154"/>
    </location>
</feature>
<feature type="strand" evidence="23">
    <location>
        <begin position="183"/>
        <end position="190"/>
    </location>
</feature>
<feature type="helix" evidence="23">
    <location>
        <begin position="193"/>
        <end position="198"/>
    </location>
</feature>
<feature type="strand" evidence="23">
    <location>
        <begin position="208"/>
        <end position="210"/>
    </location>
</feature>
<feature type="strand" evidence="23">
    <location>
        <begin position="212"/>
        <end position="214"/>
    </location>
</feature>
<feature type="helix" evidence="23">
    <location>
        <begin position="215"/>
        <end position="224"/>
    </location>
</feature>
<feature type="strand" evidence="23">
    <location>
        <begin position="228"/>
        <end position="233"/>
    </location>
</feature>
<feature type="strand" evidence="23">
    <location>
        <begin position="236"/>
        <end position="241"/>
    </location>
</feature>
<feature type="strand" evidence="23">
    <location>
        <begin position="249"/>
        <end position="254"/>
    </location>
</feature>
<feature type="helix" evidence="23">
    <location>
        <begin position="263"/>
        <end position="275"/>
    </location>
</feature>
<feature type="strand" evidence="23">
    <location>
        <begin position="279"/>
        <end position="283"/>
    </location>
</feature>
<feature type="helix" evidence="23">
    <location>
        <begin position="292"/>
        <end position="294"/>
    </location>
</feature>
<feature type="helix" evidence="23">
    <location>
        <begin position="296"/>
        <end position="306"/>
    </location>
</feature>
<feature type="strand" evidence="23">
    <location>
        <begin position="310"/>
        <end position="314"/>
    </location>
</feature>
<feature type="strand" evidence="23">
    <location>
        <begin position="332"/>
        <end position="339"/>
    </location>
</feature>
<feature type="strand" evidence="23">
    <location>
        <begin position="343"/>
        <end position="350"/>
    </location>
</feature>
<feature type="strand" evidence="23">
    <location>
        <begin position="355"/>
        <end position="359"/>
    </location>
</feature>
<feature type="strand" evidence="23">
    <location>
        <begin position="368"/>
        <end position="374"/>
    </location>
</feature>
<feature type="turn" evidence="23">
    <location>
        <begin position="377"/>
        <end position="381"/>
    </location>
</feature>
<feature type="helix" evidence="23">
    <location>
        <begin position="385"/>
        <end position="388"/>
    </location>
</feature>
<feature type="strand" evidence="23">
    <location>
        <begin position="391"/>
        <end position="393"/>
    </location>
</feature>
<feature type="helix" evidence="23">
    <location>
        <begin position="394"/>
        <end position="396"/>
    </location>
</feature>
<feature type="strand" evidence="23">
    <location>
        <begin position="398"/>
        <end position="401"/>
    </location>
</feature>
<feature type="helix" evidence="23">
    <location>
        <begin position="407"/>
        <end position="417"/>
    </location>
</feature>
<feature type="strand" evidence="23">
    <location>
        <begin position="420"/>
        <end position="425"/>
    </location>
</feature>
<feature type="helix" evidence="23">
    <location>
        <begin position="429"/>
        <end position="433"/>
    </location>
</feature>
<feature type="strand" evidence="23">
    <location>
        <begin position="441"/>
        <end position="444"/>
    </location>
</feature>
<feature type="helix" evidence="23">
    <location>
        <begin position="446"/>
        <end position="457"/>
    </location>
</feature>
<feature type="strand" evidence="23">
    <location>
        <begin position="463"/>
        <end position="472"/>
    </location>
</feature>
<feature type="strand" evidence="23">
    <location>
        <begin position="501"/>
        <end position="504"/>
    </location>
</feature>
<feature type="strand" evidence="23">
    <location>
        <begin position="506"/>
        <end position="511"/>
    </location>
</feature>
<feature type="strand" evidence="23">
    <location>
        <begin position="519"/>
        <end position="521"/>
    </location>
</feature>
<feature type="turn" evidence="23">
    <location>
        <begin position="522"/>
        <end position="524"/>
    </location>
</feature>
<feature type="strand" evidence="23">
    <location>
        <begin position="525"/>
        <end position="527"/>
    </location>
</feature>
<feature type="strand" evidence="23">
    <location>
        <begin position="530"/>
        <end position="534"/>
    </location>
</feature>
<feature type="helix" evidence="23">
    <location>
        <begin position="537"/>
        <end position="554"/>
    </location>
</feature>
<feature type="helix" evidence="23">
    <location>
        <begin position="560"/>
        <end position="569"/>
    </location>
</feature>
<feature type="strand" evidence="23">
    <location>
        <begin position="578"/>
        <end position="580"/>
    </location>
</feature>
<feature type="turn" evidence="23">
    <location>
        <begin position="584"/>
        <end position="586"/>
    </location>
</feature>
<feature type="strand" evidence="23">
    <location>
        <begin position="587"/>
        <end position="589"/>
    </location>
</feature>
<feature type="helix" evidence="23">
    <location>
        <begin position="592"/>
        <end position="595"/>
    </location>
</feature>
<feature type="helix" evidence="23">
    <location>
        <begin position="602"/>
        <end position="605"/>
    </location>
</feature>
<feature type="strand" evidence="23">
    <location>
        <begin position="609"/>
        <end position="611"/>
    </location>
</feature>
<feature type="helix" evidence="23">
    <location>
        <begin position="616"/>
        <end position="624"/>
    </location>
</feature>
<feature type="helix" evidence="23">
    <location>
        <begin position="630"/>
        <end position="637"/>
    </location>
</feature>
<feature type="turn" evidence="23">
    <location>
        <begin position="638"/>
        <end position="640"/>
    </location>
</feature>
<feature type="strand" evidence="23">
    <location>
        <begin position="655"/>
        <end position="661"/>
    </location>
</feature>
<feature type="strand" evidence="23">
    <location>
        <begin position="670"/>
        <end position="680"/>
    </location>
</feature>
<feature type="strand" evidence="23">
    <location>
        <begin position="686"/>
        <end position="693"/>
    </location>
</feature>
<feature type="strand" evidence="23">
    <location>
        <begin position="698"/>
        <end position="709"/>
    </location>
</feature>
<feature type="strand" evidence="23">
    <location>
        <begin position="715"/>
        <end position="724"/>
    </location>
</feature>
<feature type="strand" evidence="23">
    <location>
        <begin position="734"/>
        <end position="741"/>
    </location>
</feature>
<feature type="strand" evidence="23">
    <location>
        <begin position="747"/>
        <end position="756"/>
    </location>
</feature>